<name>DUG1_CANAL</name>
<comment type="function">
    <text evidence="1">Catalytic component of the GSH degradosomal complex involved in the degradation of glutathione (GSH) and other peptides containing a gamma-glu-X bond. Also functions as a dipeptidase with high specificity for Cys-Gly and no activity toward tri- or tetrapeptides (By similarity).</text>
</comment>
<comment type="cofactor">
    <cofactor evidence="1">
        <name>Zn(2+)</name>
        <dbReference type="ChEBI" id="CHEBI:29105"/>
    </cofactor>
    <cofactor evidence="1">
        <name>Mn(2+)</name>
        <dbReference type="ChEBI" id="CHEBI:29035"/>
    </cofactor>
</comment>
<comment type="subunit">
    <text evidence="1">Homodimer. Component of the GSH degradosomal complex.</text>
</comment>
<comment type="subcellular location">
    <subcellularLocation>
        <location evidence="1">Cytoplasm</location>
    </subcellularLocation>
</comment>
<comment type="similarity">
    <text evidence="2">Belongs to the peptidase M20A family.</text>
</comment>
<comment type="sequence caution" evidence="2">
    <conflict type="erroneous initiation">
        <sequence resource="EMBL-CDS" id="AOW29838"/>
    </conflict>
    <text>Truncated N-terminus.</text>
</comment>
<gene>
    <name type="primary">DUG1</name>
    <name type="ordered locus">CAALFM_C504300CA</name>
    <name type="ORF">CaO19.11397</name>
    <name type="ORF">CaO19.3915</name>
</gene>
<organism>
    <name type="scientific">Candida albicans (strain SC5314 / ATCC MYA-2876)</name>
    <name type="common">Yeast</name>
    <dbReference type="NCBI Taxonomy" id="237561"/>
    <lineage>
        <taxon>Eukaryota</taxon>
        <taxon>Fungi</taxon>
        <taxon>Dikarya</taxon>
        <taxon>Ascomycota</taxon>
        <taxon>Saccharomycotina</taxon>
        <taxon>Pichiomycetes</taxon>
        <taxon>Debaryomycetaceae</taxon>
        <taxon>Candida/Lodderomyces clade</taxon>
        <taxon>Candida</taxon>
    </lineage>
</organism>
<dbReference type="EC" id="3.4.13.-"/>
<dbReference type="EMBL" id="CP017627">
    <property type="protein sequence ID" value="AOW29838.1"/>
    <property type="status" value="ALT_INIT"/>
    <property type="molecule type" value="Genomic_DNA"/>
</dbReference>
<dbReference type="RefSeq" id="XP_721825.2">
    <property type="nucleotide sequence ID" value="XM_716732.2"/>
</dbReference>
<dbReference type="SMR" id="Q5AKA5"/>
<dbReference type="FunCoup" id="Q5AKA5">
    <property type="interactions" value="392"/>
</dbReference>
<dbReference type="STRING" id="237561.Q5AKA5"/>
<dbReference type="MEROPS" id="M20.017"/>
<dbReference type="GeneID" id="3636456"/>
<dbReference type="KEGG" id="cal:CAALFM_C504300CA"/>
<dbReference type="eggNOG" id="KOG2276">
    <property type="taxonomic scope" value="Eukaryota"/>
</dbReference>
<dbReference type="HOGENOM" id="CLU_029469_3_0_1"/>
<dbReference type="InParanoid" id="Q5AKA5"/>
<dbReference type="OrthoDB" id="7832001at2759"/>
<dbReference type="PRO" id="PR:Q5AKA5"/>
<dbReference type="Proteomes" id="UP000000559">
    <property type="component" value="Chromosome 5"/>
</dbReference>
<dbReference type="GO" id="GO:0005737">
    <property type="term" value="C:cytoplasm"/>
    <property type="evidence" value="ECO:0007669"/>
    <property type="project" value="UniProtKB-SubCell"/>
</dbReference>
<dbReference type="GO" id="GO:0046872">
    <property type="term" value="F:metal ion binding"/>
    <property type="evidence" value="ECO:0007669"/>
    <property type="project" value="UniProtKB-KW"/>
</dbReference>
<dbReference type="GO" id="GO:0070573">
    <property type="term" value="F:metallodipeptidase activity"/>
    <property type="evidence" value="ECO:0007669"/>
    <property type="project" value="InterPro"/>
</dbReference>
<dbReference type="GO" id="GO:0008233">
    <property type="term" value="F:peptidase activity"/>
    <property type="evidence" value="ECO:0000318"/>
    <property type="project" value="GO_Central"/>
</dbReference>
<dbReference type="GO" id="GO:0006508">
    <property type="term" value="P:proteolysis"/>
    <property type="evidence" value="ECO:0000318"/>
    <property type="project" value="GO_Central"/>
</dbReference>
<dbReference type="CDD" id="cd05676">
    <property type="entry name" value="M20_dipept_like_CNDP"/>
    <property type="match status" value="1"/>
</dbReference>
<dbReference type="FunFam" id="3.30.70.360:FF:000008">
    <property type="entry name" value="Cytosolic non-specific dipeptidase"/>
    <property type="match status" value="1"/>
</dbReference>
<dbReference type="Gene3D" id="3.30.70.360">
    <property type="match status" value="1"/>
</dbReference>
<dbReference type="Gene3D" id="3.40.630.10">
    <property type="entry name" value="Zn peptidases"/>
    <property type="match status" value="1"/>
</dbReference>
<dbReference type="InterPro" id="IPR001261">
    <property type="entry name" value="ArgE/DapE_CS"/>
</dbReference>
<dbReference type="InterPro" id="IPR017153">
    <property type="entry name" value="CNDP/DUG1"/>
</dbReference>
<dbReference type="InterPro" id="IPR051458">
    <property type="entry name" value="Cyt/Met_Dipeptidase"/>
</dbReference>
<dbReference type="InterPro" id="IPR002933">
    <property type="entry name" value="Peptidase_M20"/>
</dbReference>
<dbReference type="InterPro" id="IPR011650">
    <property type="entry name" value="Peptidase_M20_dimer"/>
</dbReference>
<dbReference type="PANTHER" id="PTHR43270">
    <property type="entry name" value="BETA-ALA-HIS DIPEPTIDASE"/>
    <property type="match status" value="1"/>
</dbReference>
<dbReference type="PANTHER" id="PTHR43270:SF4">
    <property type="entry name" value="CARNOSINE DIPEPTIDASE 2, ISOFORM A"/>
    <property type="match status" value="1"/>
</dbReference>
<dbReference type="Pfam" id="PF07687">
    <property type="entry name" value="M20_dimer"/>
    <property type="match status" value="1"/>
</dbReference>
<dbReference type="Pfam" id="PF01546">
    <property type="entry name" value="Peptidase_M20"/>
    <property type="match status" value="1"/>
</dbReference>
<dbReference type="PIRSF" id="PIRSF037242">
    <property type="entry name" value="CNDP_dipeptidase"/>
    <property type="match status" value="1"/>
</dbReference>
<dbReference type="SUPFAM" id="SSF53187">
    <property type="entry name" value="Zn-dependent exopeptidases"/>
    <property type="match status" value="1"/>
</dbReference>
<dbReference type="PROSITE" id="PS00759">
    <property type="entry name" value="ARGE_DAPE_CPG2_2"/>
    <property type="match status" value="1"/>
</dbReference>
<reference key="1">
    <citation type="journal article" date="2004" name="Proc. Natl. Acad. Sci. U.S.A.">
        <title>The diploid genome sequence of Candida albicans.</title>
        <authorList>
            <person name="Jones T."/>
            <person name="Federspiel N.A."/>
            <person name="Chibana H."/>
            <person name="Dungan J."/>
            <person name="Kalman S."/>
            <person name="Magee B.B."/>
            <person name="Newport G."/>
            <person name="Thorstenson Y.R."/>
            <person name="Agabian N."/>
            <person name="Magee P.T."/>
            <person name="Davis R.W."/>
            <person name="Scherer S."/>
        </authorList>
    </citation>
    <scope>NUCLEOTIDE SEQUENCE [LARGE SCALE GENOMIC DNA]</scope>
    <source>
        <strain>SC5314 / ATCC MYA-2876</strain>
    </source>
</reference>
<reference key="2">
    <citation type="journal article" date="2007" name="Genome Biol.">
        <title>Assembly of the Candida albicans genome into sixteen supercontigs aligned on the eight chromosomes.</title>
        <authorList>
            <person name="van het Hoog M."/>
            <person name="Rast T.J."/>
            <person name="Martchenko M."/>
            <person name="Grindle S."/>
            <person name="Dignard D."/>
            <person name="Hogues H."/>
            <person name="Cuomo C."/>
            <person name="Berriman M."/>
            <person name="Scherer S."/>
            <person name="Magee B.B."/>
            <person name="Whiteway M."/>
            <person name="Chibana H."/>
            <person name="Nantel A."/>
            <person name="Magee P.T."/>
        </authorList>
    </citation>
    <scope>GENOME REANNOTATION</scope>
    <source>
        <strain>SC5314 / ATCC MYA-2876</strain>
    </source>
</reference>
<reference key="3">
    <citation type="journal article" date="2013" name="Genome Biol.">
        <title>Assembly of a phased diploid Candida albicans genome facilitates allele-specific measurements and provides a simple model for repeat and indel structure.</title>
        <authorList>
            <person name="Muzzey D."/>
            <person name="Schwartz K."/>
            <person name="Weissman J.S."/>
            <person name="Sherlock G."/>
        </authorList>
    </citation>
    <scope>NUCLEOTIDE SEQUENCE [LARGE SCALE GENOMIC DNA]</scope>
    <scope>GENOME REANNOTATION</scope>
    <source>
        <strain>SC5314 / ATCC MYA-2876</strain>
    </source>
</reference>
<reference key="4">
    <citation type="journal article" date="2008" name="FEMS Yeast Res.">
        <title>Identification and characterization of CaApe2 -- a neutral arginine/alanine/leucine-specific metallo-aminopeptidase from Candida albicans.</title>
        <authorList>
            <person name="Klinke T."/>
            <person name="Rump A."/>
            <person name="Poenisch R."/>
            <person name="Schellenberger W."/>
            <person name="Mueller E.-C."/>
            <person name="Otto A."/>
            <person name="Klimm W."/>
            <person name="Kriegel T.M."/>
        </authorList>
    </citation>
    <scope>IDENTIFICATION BY MASS SPECTROMETRY</scope>
    <source>
        <strain>ATCC 2091 / CBS 2730 / DSM 1665 / CIP 1180.79 / NBRC 1393</strain>
    </source>
</reference>
<feature type="chain" id="PRO_0000370248" description="Cys-Gly metallodipeptidase DUG1">
    <location>
        <begin position="1"/>
        <end position="485"/>
    </location>
</feature>
<feature type="active site" evidence="1">
    <location>
        <position position="111"/>
    </location>
</feature>
<feature type="active site" description="Proton acceptor" evidence="1">
    <location>
        <position position="178"/>
    </location>
</feature>
<feature type="binding site" evidence="1">
    <location>
        <position position="109"/>
    </location>
    <ligand>
        <name>Zn(2+)</name>
        <dbReference type="ChEBI" id="CHEBI:29105"/>
        <label>2</label>
    </ligand>
</feature>
<feature type="binding site" evidence="1">
    <location>
        <position position="144"/>
    </location>
    <ligand>
        <name>Zn(2+)</name>
        <dbReference type="ChEBI" id="CHEBI:29105"/>
        <label>1</label>
    </ligand>
</feature>
<feature type="binding site" evidence="1">
    <location>
        <position position="144"/>
    </location>
    <ligand>
        <name>Zn(2+)</name>
        <dbReference type="ChEBI" id="CHEBI:29105"/>
        <label>2</label>
    </ligand>
</feature>
<feature type="binding site" evidence="1">
    <location>
        <position position="179"/>
    </location>
    <ligand>
        <name>Zn(2+)</name>
        <dbReference type="ChEBI" id="CHEBI:29105"/>
        <label>1</label>
    </ligand>
</feature>
<feature type="binding site" evidence="1">
    <location>
        <position position="207"/>
    </location>
    <ligand>
        <name>Zn(2+)</name>
        <dbReference type="ChEBI" id="CHEBI:29105"/>
        <label>2</label>
    </ligand>
</feature>
<feature type="binding site" evidence="1">
    <location>
        <position position="457"/>
    </location>
    <ligand>
        <name>Zn(2+)</name>
        <dbReference type="ChEBI" id="CHEBI:29105"/>
        <label>1</label>
    </ligand>
</feature>
<sequence>MSTSTTYEKLPLQPLFDTIEELKPKFIERLQKAIAIPSVSSDESLRPKVVEMANFLVDELKTLGFTDIQLKELGTQPPPVQDANLQLPPIVLGRFGNDPAKKTVLVYGHYDVQPALKDDGWKTEPFTMHYDKEKEILYGRGSTDDKGPVVGWLNVIEAHNKLGWELPVNLVVCFEGMEESGSLGLDELVAKEAQNYFKKVDQVTISDNYWLGTTKPVLTYGLRGCNYYQIIIEGPGADLHSGIFGGIIAEPMTDLIKVMSTLVDGSGKILIPGVYDMVAPLTDKEDQLYDSIDFSVEELNAASGSQTSLHDNKKDILKHRWRFPSLSLHGIEGAFSGAGAKTVIPAKVVGKFSIRTVPDIESKKLDDLVFQHITSEFKKLNSPNKFKVELIHDGNYWVSDPFNDSFTAAAKATQDVWNVVPDFTREGGSIPITLTFEKELGVDVLLLPMGRGDDGAHSINEKLDVSNYINGCKTLGGYLHYYGKA</sequence>
<keyword id="KW-0963">Cytoplasm</keyword>
<keyword id="KW-0224">Dipeptidase</keyword>
<keyword id="KW-0378">Hydrolase</keyword>
<keyword id="KW-0464">Manganese</keyword>
<keyword id="KW-0479">Metal-binding</keyword>
<keyword id="KW-0482">Metalloprotease</keyword>
<keyword id="KW-0597">Phosphoprotein</keyword>
<keyword id="KW-0645">Protease</keyword>
<keyword id="KW-1185">Reference proteome</keyword>
<keyword id="KW-0862">Zinc</keyword>
<proteinExistence type="evidence at protein level"/>
<protein>
    <recommendedName>
        <fullName>Cys-Gly metallodipeptidase DUG1</fullName>
        <ecNumber>3.4.13.-</ecNumber>
    </recommendedName>
    <alternativeName>
        <fullName>Deficient in utilization of glutathione protein 1</fullName>
    </alternativeName>
    <alternativeName>
        <fullName>GSH degradosomal complex subunit DUG1</fullName>
    </alternativeName>
</protein>
<evidence type="ECO:0000250" key="1"/>
<evidence type="ECO:0000305" key="2"/>
<accession>Q5AKA5</accession>
<accession>A0A1D8PNX7</accession>